<gene>
    <name evidence="2" type="primary">nscD</name>
    <name type="ORF">AFUA_7G00170</name>
</gene>
<comment type="function">
    <text evidence="4 5">Prenyltransferase; part of the gene cluster that mediates the biosynthesis of neosartoricin, a prenylated anthracenone that exhibits T-cell antiproliferative activity, suggestive of a physiological role as an immunosuppressive agent (PubMed:23368997, PubMed:23758576). The non-reducing polyketide synthase nscA probably synthesizes and cyclizes the decaketide backbone (PubMed:23368997). The hydrolase nscB then mediates the product release through hydrolysis followed by spontaneous decarboxylation (PubMed:23368997). The prenyltransferase nscD catalyzes the addition of the dimethylallyl group to the aromatic C5 (PubMed:23368997). The FAD-dependent monooxygenase nscC is then responsible for the stereospecific hydroxylation at C2 (PubMed:23368997). There is no gene encoding O-acetyltransferase in the nsc gene cluster; thus, the last step of 2-O-acetylation leading to neosartoricin may be catalyzed by an unidentified O-acetyltransferase (PubMed:23368997).</text>
</comment>
<comment type="pathway">
    <text evidence="4">Secondary metabolite biosynthesis.</text>
</comment>
<comment type="similarity">
    <text evidence="3">Belongs to the tryptophan dimethylallyltransferase family.</text>
</comment>
<dbReference type="EC" id="2.5.1.-" evidence="4"/>
<dbReference type="EMBL" id="AAHF01000015">
    <property type="protein sequence ID" value="EAL84874.1"/>
    <property type="molecule type" value="Genomic_DNA"/>
</dbReference>
<dbReference type="RefSeq" id="XP_746912.1">
    <property type="nucleotide sequence ID" value="XM_741819.1"/>
</dbReference>
<dbReference type="SMR" id="Q4WA62"/>
<dbReference type="STRING" id="330879.Q4WA62"/>
<dbReference type="EnsemblFungi" id="EAL84874">
    <property type="protein sequence ID" value="EAL84874"/>
    <property type="gene ID" value="AFUA_7G00170"/>
</dbReference>
<dbReference type="GeneID" id="3504087"/>
<dbReference type="KEGG" id="afm:AFUA_7G00170"/>
<dbReference type="VEuPathDB" id="FungiDB:Afu7g00170"/>
<dbReference type="eggNOG" id="ENOG502S2XP">
    <property type="taxonomic scope" value="Eukaryota"/>
</dbReference>
<dbReference type="HOGENOM" id="CLU_037431_2_2_1"/>
<dbReference type="InParanoid" id="Q4WA62"/>
<dbReference type="OMA" id="TGIDCCK"/>
<dbReference type="OrthoDB" id="3354387at2759"/>
<dbReference type="Proteomes" id="UP000002530">
    <property type="component" value="Chromosome 7"/>
</dbReference>
<dbReference type="GO" id="GO:0004659">
    <property type="term" value="F:prenyltransferase activity"/>
    <property type="evidence" value="ECO:0000318"/>
    <property type="project" value="GO_Central"/>
</dbReference>
<dbReference type="GO" id="GO:0009820">
    <property type="term" value="P:alkaloid metabolic process"/>
    <property type="evidence" value="ECO:0007669"/>
    <property type="project" value="InterPro"/>
</dbReference>
<dbReference type="GO" id="GO:0044550">
    <property type="term" value="P:secondary metabolite biosynthetic process"/>
    <property type="evidence" value="ECO:0000317"/>
    <property type="project" value="AspGD"/>
</dbReference>
<dbReference type="CDD" id="cd13929">
    <property type="entry name" value="PT-DMATS_CymD"/>
    <property type="match status" value="1"/>
</dbReference>
<dbReference type="InterPro" id="IPR033964">
    <property type="entry name" value="Aro_prenylTrfase"/>
</dbReference>
<dbReference type="InterPro" id="IPR017795">
    <property type="entry name" value="Aro_prenylTrfase_DMATS"/>
</dbReference>
<dbReference type="InterPro" id="IPR012148">
    <property type="entry name" value="DMATS-type_fun"/>
</dbReference>
<dbReference type="NCBIfam" id="TIGR03429">
    <property type="entry name" value="arom_pren_DMATS"/>
    <property type="match status" value="1"/>
</dbReference>
<dbReference type="PANTHER" id="PTHR40627">
    <property type="entry name" value="INDOLE PRENYLTRANSFERASE TDIB-RELATED"/>
    <property type="match status" value="1"/>
</dbReference>
<dbReference type="PANTHER" id="PTHR40627:SF4">
    <property type="entry name" value="PRENYLTRANSFERASE ASQH1-RELATED"/>
    <property type="match status" value="1"/>
</dbReference>
<dbReference type="Pfam" id="PF11991">
    <property type="entry name" value="Trp_DMAT"/>
    <property type="match status" value="1"/>
</dbReference>
<dbReference type="PIRSF" id="PIRSF000509">
    <property type="entry name" value="Trp_DMAT"/>
    <property type="match status" value="1"/>
</dbReference>
<dbReference type="SFLD" id="SFLDS00036">
    <property type="entry name" value="Aromatic_Prenyltransferase"/>
    <property type="match status" value="1"/>
</dbReference>
<feature type="chain" id="PRO_0000437914" description="Prenyltransferase nscD">
    <location>
        <begin position="1"/>
        <end position="453"/>
    </location>
</feature>
<feature type="binding site" evidence="1">
    <location>
        <position position="118"/>
    </location>
    <ligand>
        <name>dimethylallyl diphosphate</name>
        <dbReference type="ChEBI" id="CHEBI:57623"/>
    </ligand>
</feature>
<feature type="binding site" evidence="1">
    <location>
        <position position="200"/>
    </location>
    <ligand>
        <name>dimethylallyl diphosphate</name>
        <dbReference type="ChEBI" id="CHEBI:57623"/>
    </ligand>
</feature>
<feature type="binding site" evidence="1">
    <location>
        <position position="202"/>
    </location>
    <ligand>
        <name>dimethylallyl diphosphate</name>
        <dbReference type="ChEBI" id="CHEBI:57623"/>
    </ligand>
</feature>
<feature type="binding site" evidence="1">
    <location>
        <position position="271"/>
    </location>
    <ligand>
        <name>dimethylallyl diphosphate</name>
        <dbReference type="ChEBI" id="CHEBI:57623"/>
    </ligand>
</feature>
<feature type="binding site" evidence="1">
    <location>
        <position position="273"/>
    </location>
    <ligand>
        <name>dimethylallyl diphosphate</name>
        <dbReference type="ChEBI" id="CHEBI:57623"/>
    </ligand>
</feature>
<feature type="binding site" evidence="1">
    <location>
        <position position="428"/>
    </location>
    <ligand>
        <name>dimethylallyl diphosphate</name>
        <dbReference type="ChEBI" id="CHEBI:57623"/>
    </ligand>
</feature>
<evidence type="ECO:0000250" key="1">
    <source>
        <dbReference type="UniProtKB" id="Q4WAW7"/>
    </source>
</evidence>
<evidence type="ECO:0000303" key="2">
    <source>
    </source>
</evidence>
<evidence type="ECO:0000305" key="3"/>
<evidence type="ECO:0000305" key="4">
    <source>
    </source>
</evidence>
<evidence type="ECO:0000305" key="5">
    <source>
    </source>
</evidence>
<keyword id="KW-0637">Prenyltransferase</keyword>
<keyword id="KW-1185">Reference proteome</keyword>
<keyword id="KW-0808">Transferase</keyword>
<reference key="1">
    <citation type="journal article" date="2005" name="Nature">
        <title>Genomic sequence of the pathogenic and allergenic filamentous fungus Aspergillus fumigatus.</title>
        <authorList>
            <person name="Nierman W.C."/>
            <person name="Pain A."/>
            <person name="Anderson M.J."/>
            <person name="Wortman J.R."/>
            <person name="Kim H.S."/>
            <person name="Arroyo J."/>
            <person name="Berriman M."/>
            <person name="Abe K."/>
            <person name="Archer D.B."/>
            <person name="Bermejo C."/>
            <person name="Bennett J.W."/>
            <person name="Bowyer P."/>
            <person name="Chen D."/>
            <person name="Collins M."/>
            <person name="Coulsen R."/>
            <person name="Davies R."/>
            <person name="Dyer P.S."/>
            <person name="Farman M.L."/>
            <person name="Fedorova N."/>
            <person name="Fedorova N.D."/>
            <person name="Feldblyum T.V."/>
            <person name="Fischer R."/>
            <person name="Fosker N."/>
            <person name="Fraser A."/>
            <person name="Garcia J.L."/>
            <person name="Garcia M.J."/>
            <person name="Goble A."/>
            <person name="Goldman G.H."/>
            <person name="Gomi K."/>
            <person name="Griffith-Jones S."/>
            <person name="Gwilliam R."/>
            <person name="Haas B.J."/>
            <person name="Haas H."/>
            <person name="Harris D.E."/>
            <person name="Horiuchi H."/>
            <person name="Huang J."/>
            <person name="Humphray S."/>
            <person name="Jimenez J."/>
            <person name="Keller N."/>
            <person name="Khouri H."/>
            <person name="Kitamoto K."/>
            <person name="Kobayashi T."/>
            <person name="Konzack S."/>
            <person name="Kulkarni R."/>
            <person name="Kumagai T."/>
            <person name="Lafton A."/>
            <person name="Latge J.-P."/>
            <person name="Li W."/>
            <person name="Lord A."/>
            <person name="Lu C."/>
            <person name="Majoros W.H."/>
            <person name="May G.S."/>
            <person name="Miller B.L."/>
            <person name="Mohamoud Y."/>
            <person name="Molina M."/>
            <person name="Monod M."/>
            <person name="Mouyna I."/>
            <person name="Mulligan S."/>
            <person name="Murphy L.D."/>
            <person name="O'Neil S."/>
            <person name="Paulsen I."/>
            <person name="Penalva M.A."/>
            <person name="Pertea M."/>
            <person name="Price C."/>
            <person name="Pritchard B.L."/>
            <person name="Quail M.A."/>
            <person name="Rabbinowitsch E."/>
            <person name="Rawlins N."/>
            <person name="Rajandream M.A."/>
            <person name="Reichard U."/>
            <person name="Renauld H."/>
            <person name="Robson G.D."/>
            <person name="Rodriguez de Cordoba S."/>
            <person name="Rodriguez-Pena J.M."/>
            <person name="Ronning C.M."/>
            <person name="Rutter S."/>
            <person name="Salzberg S.L."/>
            <person name="Sanchez M."/>
            <person name="Sanchez-Ferrero J.C."/>
            <person name="Saunders D."/>
            <person name="Seeger K."/>
            <person name="Squares R."/>
            <person name="Squares S."/>
            <person name="Takeuchi M."/>
            <person name="Tekaia F."/>
            <person name="Turner G."/>
            <person name="Vazquez de Aldana C.R."/>
            <person name="Weidman J."/>
            <person name="White O."/>
            <person name="Woodward J.R."/>
            <person name="Yu J.-H."/>
            <person name="Fraser C.M."/>
            <person name="Galagan J.E."/>
            <person name="Asai K."/>
            <person name="Machida M."/>
            <person name="Hall N."/>
            <person name="Barrell B.G."/>
            <person name="Denning D.W."/>
        </authorList>
    </citation>
    <scope>NUCLEOTIDE SEQUENCE [LARGE SCALE GENOMIC DNA]</scope>
    <source>
        <strain>ATCC MYA-4609 / CBS 101355 / FGSC A1100 / Af293</strain>
    </source>
</reference>
<reference key="2">
    <citation type="journal article" date="2013" name="ACS Synth. Biol.">
        <title>Discovery of cryptic polyketide metabolites from dermatophytes using heterologous expression in Aspergillus nidulans.</title>
        <authorList>
            <person name="Yin W.B."/>
            <person name="Chooi Y.H."/>
            <person name="Smith A.R."/>
            <person name="Cacho R.A."/>
            <person name="Hu Y."/>
            <person name="White T.C."/>
            <person name="Tang Y."/>
        </authorList>
    </citation>
    <scope>FUNCTION</scope>
</reference>
<reference key="3">
    <citation type="journal article" date="2013" name="Org. Lett.">
        <title>Genome mining of a prenylated and immunosuppressive polyketide from pathogenic fungi.</title>
        <authorList>
            <person name="Chooi Y.H."/>
            <person name="Fang J."/>
            <person name="Liu H."/>
            <person name="Filler S.G."/>
            <person name="Wang P."/>
            <person name="Tang Y."/>
        </authorList>
    </citation>
    <scope>FUNCTION</scope>
</reference>
<protein>
    <recommendedName>
        <fullName evidence="2">Prenyltransferase nscD</fullName>
        <ecNumber evidence="4">2.5.1.-</ecNumber>
    </recommendedName>
    <alternativeName>
        <fullName evidence="2">Neosartoricin biosynthesis protein D</fullName>
    </alternativeName>
</protein>
<accession>Q4WA62</accession>
<proteinExistence type="inferred from homology"/>
<name>NSCD_ASPFU</name>
<sequence>MSLQLNGKSRGTSPGNAQPLPIFDALCRSLPVGTADEQFWWKLTGRHLARMMLEAGYPEHRQVECLVFHRFKVVPTFGPQPRSAEPWYRSRVAASAGDGAPISYSWRFGTADRKPYIRNYIEPLGPLTGTAADPNNDVATRAFLQDLTTTLPNLDLSLFWTFEPHLVSRFSDKADREKYAGPSVLTGVELSPDSDAIDIKMYLYPRNPEQISQLLSTIIPKAMRDAYGEDVCLDSLNIVKDFLTNHPDGRQLKPRGTTGIDCCKVQDSRVKFYVATDNTSFDHIATVMTIGGRRPLSTEVLDKLRELWYELNGLPSDFPTSEQVPTGQGQELPAGHHGVGFYYDIQPRLALPDVKAFINVRKHAKSDLAAAETVISFLERHGQGHHNPRAYLNVLRDIVPAEELETRVGAQAFYSVAVKKEELDITAYFIPQVYRRFASVQVELNGQRRSRFE</sequence>
<organism>
    <name type="scientific">Aspergillus fumigatus (strain ATCC MYA-4609 / CBS 101355 / FGSC A1100 / Af293)</name>
    <name type="common">Neosartorya fumigata</name>
    <dbReference type="NCBI Taxonomy" id="330879"/>
    <lineage>
        <taxon>Eukaryota</taxon>
        <taxon>Fungi</taxon>
        <taxon>Dikarya</taxon>
        <taxon>Ascomycota</taxon>
        <taxon>Pezizomycotina</taxon>
        <taxon>Eurotiomycetes</taxon>
        <taxon>Eurotiomycetidae</taxon>
        <taxon>Eurotiales</taxon>
        <taxon>Aspergillaceae</taxon>
        <taxon>Aspergillus</taxon>
        <taxon>Aspergillus subgen. Fumigati</taxon>
    </lineage>
</organism>